<protein>
    <recommendedName>
        <fullName>HTH-type transcriptional repressor RspR</fullName>
    </recommendedName>
</protein>
<gene>
    <name type="primary">rspR</name>
    <name type="synonym">ydfH</name>
    <name type="ordered locus">b1540</name>
    <name type="ordered locus">JW1533</name>
</gene>
<proteinExistence type="evidence at protein level"/>
<comment type="function">
    <text evidence="2">Repressor of the rspAB operon. Acts by binding directly to the upstream region of rspA.</text>
</comment>
<evidence type="ECO:0000255" key="1">
    <source>
        <dbReference type="PROSITE-ProRule" id="PRU00307"/>
    </source>
</evidence>
<evidence type="ECO:0000269" key="2">
    <source>
    </source>
</evidence>
<reference key="1">
    <citation type="journal article" date="1996" name="DNA Res.">
        <title>A 570-kb DNA sequence of the Escherichia coli K-12 genome corresponding to the 28.0-40.1 min region on the linkage map.</title>
        <authorList>
            <person name="Aiba H."/>
            <person name="Baba T."/>
            <person name="Fujita K."/>
            <person name="Hayashi K."/>
            <person name="Inada T."/>
            <person name="Isono K."/>
            <person name="Itoh T."/>
            <person name="Kasai H."/>
            <person name="Kashimoto K."/>
            <person name="Kimura S."/>
            <person name="Kitakawa M."/>
            <person name="Kitagawa M."/>
            <person name="Makino K."/>
            <person name="Miki T."/>
            <person name="Mizobuchi K."/>
            <person name="Mori H."/>
            <person name="Mori T."/>
            <person name="Motomura K."/>
            <person name="Nakade S."/>
            <person name="Nakamura Y."/>
            <person name="Nashimoto H."/>
            <person name="Nishio Y."/>
            <person name="Oshima T."/>
            <person name="Saito N."/>
            <person name="Sampei G."/>
            <person name="Seki Y."/>
            <person name="Sivasundaram S."/>
            <person name="Tagami H."/>
            <person name="Takeda J."/>
            <person name="Takemoto K."/>
            <person name="Takeuchi Y."/>
            <person name="Wada C."/>
            <person name="Yamamoto Y."/>
            <person name="Horiuchi T."/>
        </authorList>
    </citation>
    <scope>NUCLEOTIDE SEQUENCE [LARGE SCALE GENOMIC DNA]</scope>
    <source>
        <strain>K12 / W3110 / ATCC 27325 / DSM 5911</strain>
    </source>
</reference>
<reference key="2">
    <citation type="journal article" date="1997" name="Science">
        <title>The complete genome sequence of Escherichia coli K-12.</title>
        <authorList>
            <person name="Blattner F.R."/>
            <person name="Plunkett G. III"/>
            <person name="Bloch C.A."/>
            <person name="Perna N.T."/>
            <person name="Burland V."/>
            <person name="Riley M."/>
            <person name="Collado-Vides J."/>
            <person name="Glasner J.D."/>
            <person name="Rode C.K."/>
            <person name="Mayhew G.F."/>
            <person name="Gregor J."/>
            <person name="Davis N.W."/>
            <person name="Kirkpatrick H.A."/>
            <person name="Goeden M.A."/>
            <person name="Rose D.J."/>
            <person name="Mau B."/>
            <person name="Shao Y."/>
        </authorList>
    </citation>
    <scope>NUCLEOTIDE SEQUENCE [LARGE SCALE GENOMIC DNA]</scope>
    <source>
        <strain>K12 / MG1655 / ATCC 47076</strain>
    </source>
</reference>
<reference key="3">
    <citation type="journal article" date="2006" name="Mol. Syst. Biol.">
        <title>Highly accurate genome sequences of Escherichia coli K-12 strains MG1655 and W3110.</title>
        <authorList>
            <person name="Hayashi K."/>
            <person name="Morooka N."/>
            <person name="Yamamoto Y."/>
            <person name="Fujita K."/>
            <person name="Isono K."/>
            <person name="Choi S."/>
            <person name="Ohtsubo E."/>
            <person name="Baba T."/>
            <person name="Wanner B.L."/>
            <person name="Mori H."/>
            <person name="Horiuchi T."/>
        </authorList>
    </citation>
    <scope>NUCLEOTIDE SEQUENCE [LARGE SCALE GENOMIC DNA]</scope>
    <source>
        <strain>K12 / W3110 / ATCC 27325 / DSM 5911</strain>
    </source>
</reference>
<reference key="4">
    <citation type="journal article" date="2012" name="Biosci. Biotechnol. Biochem.">
        <title>YdfH identified as a repressor of rspA by the use of reduced genome Escherichia coli MGF-01.</title>
        <authorList>
            <person name="Sakihama Y."/>
            <person name="Mizoguchi H."/>
            <person name="Oshima T."/>
            <person name="Ogasawara N."/>
        </authorList>
    </citation>
    <scope>FUNCTION</scope>
    <scope>DNA-BINDING</scope>
    <source>
        <strain>K12 / W3110 / ATCC 27325 / DSM 5911</strain>
    </source>
</reference>
<keyword id="KW-0238">DNA-binding</keyword>
<keyword id="KW-1185">Reference proteome</keyword>
<keyword id="KW-0678">Repressor</keyword>
<keyword id="KW-0804">Transcription</keyword>
<keyword id="KW-0805">Transcription regulation</keyword>
<sequence>MTVETQLNPTQPVNQQIYRILRRDIVHCLIAPGTPLSEKEVSVRFNVSRQPVREAFIKLAENGLIQIRPQRGSYVNKISMAQVRNGSFIRQAIECAVARRAASMITESQCYQLEQNLHQQRIAIERKQLDDFFELDDNFHQLLTQIADCQLAWDTIENLKATVDRVRYMSFDHVSPPEMLLRQHLDIFSALQKRDGDAVERAMTQHLQEISESVRQIRQENSDWFSEE</sequence>
<accession>P0ACM2</accession>
<accession>P77577</accession>
<accession>Q83L25</accession>
<name>RSPR_ECOLI</name>
<feature type="chain" id="PRO_0000050672" description="HTH-type transcriptional repressor RspR">
    <location>
        <begin position="1"/>
        <end position="228"/>
    </location>
</feature>
<feature type="domain" description="HTH gntR-type" evidence="1">
    <location>
        <begin position="11"/>
        <end position="78"/>
    </location>
</feature>
<feature type="DNA-binding region" description="H-T-H motif" evidence="1">
    <location>
        <begin position="38"/>
        <end position="57"/>
    </location>
</feature>
<dbReference type="EMBL" id="U00096">
    <property type="protein sequence ID" value="AAC74613.1"/>
    <property type="molecule type" value="Genomic_DNA"/>
</dbReference>
<dbReference type="EMBL" id="AP009048">
    <property type="protein sequence ID" value="BAA15242.1"/>
    <property type="molecule type" value="Genomic_DNA"/>
</dbReference>
<dbReference type="PIR" id="G64908">
    <property type="entry name" value="G64908"/>
</dbReference>
<dbReference type="RefSeq" id="NP_416058.1">
    <property type="nucleotide sequence ID" value="NC_000913.3"/>
</dbReference>
<dbReference type="RefSeq" id="WP_000215549.1">
    <property type="nucleotide sequence ID" value="NZ_STEB01000003.1"/>
</dbReference>
<dbReference type="SMR" id="P0ACM2"/>
<dbReference type="BioGRID" id="4261737">
    <property type="interactions" value="122"/>
</dbReference>
<dbReference type="FunCoup" id="P0ACM2">
    <property type="interactions" value="69"/>
</dbReference>
<dbReference type="IntAct" id="P0ACM2">
    <property type="interactions" value="2"/>
</dbReference>
<dbReference type="STRING" id="511145.b1540"/>
<dbReference type="jPOST" id="P0ACM2"/>
<dbReference type="PaxDb" id="511145-b1540"/>
<dbReference type="EnsemblBacteria" id="AAC74613">
    <property type="protein sequence ID" value="AAC74613"/>
    <property type="gene ID" value="b1540"/>
</dbReference>
<dbReference type="GeneID" id="93775704"/>
<dbReference type="GeneID" id="946087"/>
<dbReference type="KEGG" id="ecj:JW1533"/>
<dbReference type="KEGG" id="eco:b1540"/>
<dbReference type="KEGG" id="ecoc:C3026_08895"/>
<dbReference type="PATRIC" id="fig|511145.12.peg.1610"/>
<dbReference type="EchoBASE" id="EB3581"/>
<dbReference type="eggNOG" id="COG1802">
    <property type="taxonomic scope" value="Bacteria"/>
</dbReference>
<dbReference type="HOGENOM" id="CLU_017584_5_2_6"/>
<dbReference type="InParanoid" id="P0ACM2"/>
<dbReference type="OMA" id="AWDTVEN"/>
<dbReference type="OrthoDB" id="9788098at2"/>
<dbReference type="PhylomeDB" id="P0ACM2"/>
<dbReference type="BioCyc" id="EcoCyc:G6814-MONOMER"/>
<dbReference type="PRO" id="PR:P0ACM2"/>
<dbReference type="Proteomes" id="UP000000625">
    <property type="component" value="Chromosome"/>
</dbReference>
<dbReference type="GO" id="GO:0003677">
    <property type="term" value="F:DNA binding"/>
    <property type="evidence" value="ECO:0000314"/>
    <property type="project" value="EcoCyc"/>
</dbReference>
<dbReference type="GO" id="GO:0003700">
    <property type="term" value="F:DNA-binding transcription factor activity"/>
    <property type="evidence" value="ECO:0007669"/>
    <property type="project" value="InterPro"/>
</dbReference>
<dbReference type="CDD" id="cd07377">
    <property type="entry name" value="WHTH_GntR"/>
    <property type="match status" value="1"/>
</dbReference>
<dbReference type="FunFam" id="1.10.10.10:FF:000127">
    <property type="entry name" value="GntR family transcriptional regulator"/>
    <property type="match status" value="1"/>
</dbReference>
<dbReference type="FunFam" id="1.20.120.530:FF:000005">
    <property type="entry name" value="Transcriptional regulator, GntR family"/>
    <property type="match status" value="1"/>
</dbReference>
<dbReference type="Gene3D" id="1.20.120.530">
    <property type="entry name" value="GntR ligand-binding domain-like"/>
    <property type="match status" value="1"/>
</dbReference>
<dbReference type="Gene3D" id="1.10.10.10">
    <property type="entry name" value="Winged helix-like DNA-binding domain superfamily/Winged helix DNA-binding domain"/>
    <property type="match status" value="1"/>
</dbReference>
<dbReference type="InterPro" id="IPR011711">
    <property type="entry name" value="GntR_C"/>
</dbReference>
<dbReference type="InterPro" id="IPR008920">
    <property type="entry name" value="TF_FadR/GntR_C"/>
</dbReference>
<dbReference type="InterPro" id="IPR000524">
    <property type="entry name" value="Tscrpt_reg_HTH_GntR"/>
</dbReference>
<dbReference type="InterPro" id="IPR036388">
    <property type="entry name" value="WH-like_DNA-bd_sf"/>
</dbReference>
<dbReference type="InterPro" id="IPR036390">
    <property type="entry name" value="WH_DNA-bd_sf"/>
</dbReference>
<dbReference type="PANTHER" id="PTHR43537:SF6">
    <property type="entry name" value="HTH-TYPE TRANSCRIPTIONAL REPRESSOR RSPR"/>
    <property type="match status" value="1"/>
</dbReference>
<dbReference type="PANTHER" id="PTHR43537">
    <property type="entry name" value="TRANSCRIPTIONAL REGULATOR, GNTR FAMILY"/>
    <property type="match status" value="1"/>
</dbReference>
<dbReference type="Pfam" id="PF07729">
    <property type="entry name" value="FCD"/>
    <property type="match status" value="1"/>
</dbReference>
<dbReference type="Pfam" id="PF00392">
    <property type="entry name" value="GntR"/>
    <property type="match status" value="1"/>
</dbReference>
<dbReference type="PRINTS" id="PR00035">
    <property type="entry name" value="HTHGNTR"/>
</dbReference>
<dbReference type="SMART" id="SM00895">
    <property type="entry name" value="FCD"/>
    <property type="match status" value="1"/>
</dbReference>
<dbReference type="SMART" id="SM00345">
    <property type="entry name" value="HTH_GNTR"/>
    <property type="match status" value="1"/>
</dbReference>
<dbReference type="SUPFAM" id="SSF48008">
    <property type="entry name" value="GntR ligand-binding domain-like"/>
    <property type="match status" value="1"/>
</dbReference>
<dbReference type="SUPFAM" id="SSF46785">
    <property type="entry name" value="Winged helix' DNA-binding domain"/>
    <property type="match status" value="1"/>
</dbReference>
<dbReference type="PROSITE" id="PS50949">
    <property type="entry name" value="HTH_GNTR"/>
    <property type="match status" value="1"/>
</dbReference>
<organism>
    <name type="scientific">Escherichia coli (strain K12)</name>
    <dbReference type="NCBI Taxonomy" id="83333"/>
    <lineage>
        <taxon>Bacteria</taxon>
        <taxon>Pseudomonadati</taxon>
        <taxon>Pseudomonadota</taxon>
        <taxon>Gammaproteobacteria</taxon>
        <taxon>Enterobacterales</taxon>
        <taxon>Enterobacteriaceae</taxon>
        <taxon>Escherichia</taxon>
    </lineage>
</organism>